<comment type="function">
    <text evidence="1">Responsible for the release of ribosomes from messenger RNA at the termination of protein biosynthesis. May increase the efficiency of translation by recycling ribosomes from one round of translation to another.</text>
</comment>
<comment type="subcellular location">
    <subcellularLocation>
        <location evidence="1">Cytoplasm</location>
    </subcellularLocation>
</comment>
<comment type="similarity">
    <text evidence="1">Belongs to the RRF family.</text>
</comment>
<keyword id="KW-0963">Cytoplasm</keyword>
<keyword id="KW-0648">Protein biosynthesis</keyword>
<reference key="1">
    <citation type="journal article" date="2004" name="Nat. Biotechnol.">
        <title>The genome sequence of the extreme thermophile Thermus thermophilus.</title>
        <authorList>
            <person name="Henne A."/>
            <person name="Brueggemann H."/>
            <person name="Raasch C."/>
            <person name="Wiezer A."/>
            <person name="Hartsch T."/>
            <person name="Liesegang H."/>
            <person name="Johann A."/>
            <person name="Lienard T."/>
            <person name="Gohl O."/>
            <person name="Martinez-Arias R."/>
            <person name="Jacobi C."/>
            <person name="Starkuviene V."/>
            <person name="Schlenczeck S."/>
            <person name="Dencker S."/>
            <person name="Huber R."/>
            <person name="Klenk H.-P."/>
            <person name="Kramer W."/>
            <person name="Merkl R."/>
            <person name="Gottschalk G."/>
            <person name="Fritz H.-J."/>
        </authorList>
    </citation>
    <scope>NUCLEOTIDE SEQUENCE [LARGE SCALE GENOMIC DNA]</scope>
    <source>
        <strain>ATCC BAA-163 / DSM 7039 / HB27</strain>
    </source>
</reference>
<feature type="chain" id="PRO_0000167566" description="Ribosome-recycling factor">
    <location>
        <begin position="1"/>
        <end position="185"/>
    </location>
</feature>
<sequence>MTLKELYAETRSHMQKSLEVLEHNLAGLRTGRANPALLLHLKVEYYGAHVPLNQIATVTAPDPRTLVVQSWDQNALKAIEKAIRDSDLGLNPSNKGDALYINIPPLTEERRKDLVRAVRQYAEEGRVAIRNIRREALDKLKKLAKELHLSEDETKRAEAEIQKITDEFIAKADQLAEKKEQEILG</sequence>
<accession>Q72KE0</accession>
<proteinExistence type="inferred from homology"/>
<evidence type="ECO:0000255" key="1">
    <source>
        <dbReference type="HAMAP-Rule" id="MF_00040"/>
    </source>
</evidence>
<gene>
    <name evidence="1" type="primary">frr</name>
    <name type="ordered locus">TT_C0506</name>
</gene>
<protein>
    <recommendedName>
        <fullName evidence="1">Ribosome-recycling factor</fullName>
        <shortName evidence="1">RRF</shortName>
    </recommendedName>
    <alternativeName>
        <fullName evidence="1">Ribosome-releasing factor</fullName>
    </alternativeName>
</protein>
<name>RRF_THET2</name>
<organism>
    <name type="scientific">Thermus thermophilus (strain ATCC BAA-163 / DSM 7039 / HB27)</name>
    <dbReference type="NCBI Taxonomy" id="262724"/>
    <lineage>
        <taxon>Bacteria</taxon>
        <taxon>Thermotogati</taxon>
        <taxon>Deinococcota</taxon>
        <taxon>Deinococci</taxon>
        <taxon>Thermales</taxon>
        <taxon>Thermaceae</taxon>
        <taxon>Thermus</taxon>
    </lineage>
</organism>
<dbReference type="EMBL" id="AE017221">
    <property type="protein sequence ID" value="AAS80854.1"/>
    <property type="molecule type" value="Genomic_DNA"/>
</dbReference>
<dbReference type="RefSeq" id="WP_011172951.1">
    <property type="nucleotide sequence ID" value="NC_005835.1"/>
</dbReference>
<dbReference type="BMRB" id="Q72KE0"/>
<dbReference type="SMR" id="Q72KE0"/>
<dbReference type="GeneID" id="3170111"/>
<dbReference type="KEGG" id="tth:TT_C0506"/>
<dbReference type="eggNOG" id="COG0233">
    <property type="taxonomic scope" value="Bacteria"/>
</dbReference>
<dbReference type="HOGENOM" id="CLU_073981_2_0_0"/>
<dbReference type="OrthoDB" id="9804006at2"/>
<dbReference type="Proteomes" id="UP000000592">
    <property type="component" value="Chromosome"/>
</dbReference>
<dbReference type="GO" id="GO:0005737">
    <property type="term" value="C:cytoplasm"/>
    <property type="evidence" value="ECO:0007669"/>
    <property type="project" value="UniProtKB-SubCell"/>
</dbReference>
<dbReference type="GO" id="GO:0043023">
    <property type="term" value="F:ribosomal large subunit binding"/>
    <property type="evidence" value="ECO:0007669"/>
    <property type="project" value="TreeGrafter"/>
</dbReference>
<dbReference type="GO" id="GO:0006415">
    <property type="term" value="P:translational termination"/>
    <property type="evidence" value="ECO:0007669"/>
    <property type="project" value="UniProtKB-UniRule"/>
</dbReference>
<dbReference type="CDD" id="cd00520">
    <property type="entry name" value="RRF"/>
    <property type="match status" value="1"/>
</dbReference>
<dbReference type="FunFam" id="1.10.132.20:FF:000001">
    <property type="entry name" value="Ribosome-recycling factor"/>
    <property type="match status" value="1"/>
</dbReference>
<dbReference type="FunFam" id="3.30.1360.40:FF:000001">
    <property type="entry name" value="Ribosome-recycling factor"/>
    <property type="match status" value="1"/>
</dbReference>
<dbReference type="Gene3D" id="3.30.1360.40">
    <property type="match status" value="1"/>
</dbReference>
<dbReference type="Gene3D" id="1.10.132.20">
    <property type="entry name" value="Ribosome-recycling factor"/>
    <property type="match status" value="1"/>
</dbReference>
<dbReference type="HAMAP" id="MF_00040">
    <property type="entry name" value="RRF"/>
    <property type="match status" value="1"/>
</dbReference>
<dbReference type="InterPro" id="IPR002661">
    <property type="entry name" value="Ribosome_recyc_fac"/>
</dbReference>
<dbReference type="InterPro" id="IPR023584">
    <property type="entry name" value="Ribosome_recyc_fac_dom"/>
</dbReference>
<dbReference type="InterPro" id="IPR036191">
    <property type="entry name" value="RRF_sf"/>
</dbReference>
<dbReference type="NCBIfam" id="TIGR00496">
    <property type="entry name" value="frr"/>
    <property type="match status" value="1"/>
</dbReference>
<dbReference type="PANTHER" id="PTHR20982:SF3">
    <property type="entry name" value="MITOCHONDRIAL RIBOSOME RECYCLING FACTOR PSEUDO 1"/>
    <property type="match status" value="1"/>
</dbReference>
<dbReference type="PANTHER" id="PTHR20982">
    <property type="entry name" value="RIBOSOME RECYCLING FACTOR"/>
    <property type="match status" value="1"/>
</dbReference>
<dbReference type="Pfam" id="PF01765">
    <property type="entry name" value="RRF"/>
    <property type="match status" value="1"/>
</dbReference>
<dbReference type="SUPFAM" id="SSF55194">
    <property type="entry name" value="Ribosome recycling factor, RRF"/>
    <property type="match status" value="1"/>
</dbReference>